<name>QUEF_XANC8</name>
<reference key="1">
    <citation type="journal article" date="2005" name="Genome Res.">
        <title>Comparative and functional genomic analyses of the pathogenicity of phytopathogen Xanthomonas campestris pv. campestris.</title>
        <authorList>
            <person name="Qian W."/>
            <person name="Jia Y."/>
            <person name="Ren S.-X."/>
            <person name="He Y.-Q."/>
            <person name="Feng J.-X."/>
            <person name="Lu L.-F."/>
            <person name="Sun Q."/>
            <person name="Ying G."/>
            <person name="Tang D.-J."/>
            <person name="Tang H."/>
            <person name="Wu W."/>
            <person name="Hao P."/>
            <person name="Wang L."/>
            <person name="Jiang B.-L."/>
            <person name="Zeng S."/>
            <person name="Gu W.-Y."/>
            <person name="Lu G."/>
            <person name="Rong L."/>
            <person name="Tian Y."/>
            <person name="Yao Z."/>
            <person name="Fu G."/>
            <person name="Chen B."/>
            <person name="Fang R."/>
            <person name="Qiang B."/>
            <person name="Chen Z."/>
            <person name="Zhao G.-P."/>
            <person name="Tang J.-L."/>
            <person name="He C."/>
        </authorList>
    </citation>
    <scope>NUCLEOTIDE SEQUENCE [LARGE SCALE GENOMIC DNA]</scope>
    <source>
        <strain>8004</strain>
    </source>
</reference>
<dbReference type="EC" id="1.7.1.13" evidence="1"/>
<dbReference type="EMBL" id="CP000050">
    <property type="protein sequence ID" value="AAY50897.1"/>
    <property type="molecule type" value="Genomic_DNA"/>
</dbReference>
<dbReference type="RefSeq" id="WP_011038866.1">
    <property type="nucleotide sequence ID" value="NZ_CP155948.1"/>
</dbReference>
<dbReference type="SMR" id="Q4UPX6"/>
<dbReference type="KEGG" id="xcb:XC_3857"/>
<dbReference type="HOGENOM" id="CLU_054738_0_0_6"/>
<dbReference type="UniPathway" id="UPA00392"/>
<dbReference type="Proteomes" id="UP000000420">
    <property type="component" value="Chromosome"/>
</dbReference>
<dbReference type="GO" id="GO:0005737">
    <property type="term" value="C:cytoplasm"/>
    <property type="evidence" value="ECO:0007669"/>
    <property type="project" value="UniProtKB-SubCell"/>
</dbReference>
<dbReference type="GO" id="GO:0033739">
    <property type="term" value="F:preQ1 synthase activity"/>
    <property type="evidence" value="ECO:0007669"/>
    <property type="project" value="UniProtKB-UniRule"/>
</dbReference>
<dbReference type="GO" id="GO:0008616">
    <property type="term" value="P:queuosine biosynthetic process"/>
    <property type="evidence" value="ECO:0007669"/>
    <property type="project" value="UniProtKB-UniRule"/>
</dbReference>
<dbReference type="GO" id="GO:0006400">
    <property type="term" value="P:tRNA modification"/>
    <property type="evidence" value="ECO:0007669"/>
    <property type="project" value="UniProtKB-UniRule"/>
</dbReference>
<dbReference type="Gene3D" id="3.30.1130.10">
    <property type="match status" value="2"/>
</dbReference>
<dbReference type="HAMAP" id="MF_00817">
    <property type="entry name" value="QueF_type2"/>
    <property type="match status" value="1"/>
</dbReference>
<dbReference type="InterPro" id="IPR043133">
    <property type="entry name" value="GTP-CH-I_C/QueF"/>
</dbReference>
<dbReference type="InterPro" id="IPR050084">
    <property type="entry name" value="NADPH_dep_7-cyano-7-deazaG_red"/>
</dbReference>
<dbReference type="InterPro" id="IPR029500">
    <property type="entry name" value="QueF"/>
</dbReference>
<dbReference type="InterPro" id="IPR029139">
    <property type="entry name" value="QueF_N"/>
</dbReference>
<dbReference type="InterPro" id="IPR016428">
    <property type="entry name" value="QueF_type2"/>
</dbReference>
<dbReference type="NCBIfam" id="TIGR03138">
    <property type="entry name" value="QueF"/>
    <property type="match status" value="1"/>
</dbReference>
<dbReference type="PANTHER" id="PTHR34354">
    <property type="entry name" value="NADPH-DEPENDENT 7-CYANO-7-DEAZAGUANINE REDUCTASE"/>
    <property type="match status" value="1"/>
</dbReference>
<dbReference type="PANTHER" id="PTHR34354:SF1">
    <property type="entry name" value="NADPH-DEPENDENT 7-CYANO-7-DEAZAGUANINE REDUCTASE"/>
    <property type="match status" value="1"/>
</dbReference>
<dbReference type="Pfam" id="PF14489">
    <property type="entry name" value="QueF"/>
    <property type="match status" value="1"/>
</dbReference>
<dbReference type="Pfam" id="PF14819">
    <property type="entry name" value="QueF_N"/>
    <property type="match status" value="1"/>
</dbReference>
<dbReference type="PIRSF" id="PIRSF004750">
    <property type="entry name" value="Nitrile_oxidored_YqcD_prd"/>
    <property type="match status" value="1"/>
</dbReference>
<dbReference type="SUPFAM" id="SSF55620">
    <property type="entry name" value="Tetrahydrobiopterin biosynthesis enzymes-like"/>
    <property type="match status" value="1"/>
</dbReference>
<organism>
    <name type="scientific">Xanthomonas campestris pv. campestris (strain 8004)</name>
    <dbReference type="NCBI Taxonomy" id="314565"/>
    <lineage>
        <taxon>Bacteria</taxon>
        <taxon>Pseudomonadati</taxon>
        <taxon>Pseudomonadota</taxon>
        <taxon>Gammaproteobacteria</taxon>
        <taxon>Lysobacterales</taxon>
        <taxon>Lysobacteraceae</taxon>
        <taxon>Xanthomonas</taxon>
    </lineage>
</organism>
<sequence>MNTPEDSSLGREVAYPSGYDPSLLFPIPRAAGRAAIGLRGALPFVGRDRWHAYELSWLDAHGKPCVATATLHVPCESPALIESKSLKLYLNSLNATRFNSAEAVRARIATDLSTRAGADVSVEFGLPPIDAVGEGESIDALDIAIDDYGPPKADYLATHAGTVVEEVLASALLKSNCPVTGQPDWASVTLRYRGAPIDREGLLRYLVSFRDHADFHEQCVERIFQDLLVRCAPQWLVVEARYTRRGGLDINPVRTSPQMPTPLSIFRDLRQ</sequence>
<protein>
    <recommendedName>
        <fullName evidence="1">NADPH-dependent 7-cyano-7-deazaguanine reductase</fullName>
        <ecNumber evidence="1">1.7.1.13</ecNumber>
    </recommendedName>
    <alternativeName>
        <fullName evidence="1">7-cyano-7-carbaguanine reductase</fullName>
    </alternativeName>
    <alternativeName>
        <fullName evidence="1">NADPH-dependent nitrile oxidoreductase</fullName>
    </alternativeName>
    <alternativeName>
        <fullName evidence="1">PreQ(0) reductase</fullName>
    </alternativeName>
</protein>
<comment type="function">
    <text evidence="1">Catalyzes the NADPH-dependent reduction of 7-cyano-7-deazaguanine (preQ0) to 7-aminomethyl-7-deazaguanine (preQ1).</text>
</comment>
<comment type="catalytic activity">
    <reaction evidence="1">
        <text>7-aminomethyl-7-carbaguanine + 2 NADP(+) = 7-cyano-7-deazaguanine + 2 NADPH + 3 H(+)</text>
        <dbReference type="Rhea" id="RHEA:13409"/>
        <dbReference type="ChEBI" id="CHEBI:15378"/>
        <dbReference type="ChEBI" id="CHEBI:45075"/>
        <dbReference type="ChEBI" id="CHEBI:57783"/>
        <dbReference type="ChEBI" id="CHEBI:58349"/>
        <dbReference type="ChEBI" id="CHEBI:58703"/>
        <dbReference type="EC" id="1.7.1.13"/>
    </reaction>
</comment>
<comment type="pathway">
    <text evidence="1">tRNA modification; tRNA-queuosine biosynthesis.</text>
</comment>
<comment type="subunit">
    <text evidence="1">Homodimer.</text>
</comment>
<comment type="subcellular location">
    <subcellularLocation>
        <location evidence="1">Cytoplasm</location>
    </subcellularLocation>
</comment>
<comment type="similarity">
    <text evidence="1">Belongs to the GTP cyclohydrolase I family. QueF type 2 subfamily.</text>
</comment>
<feature type="chain" id="PRO_0000163069" description="NADPH-dependent 7-cyano-7-deazaguanine reductase">
    <location>
        <begin position="1"/>
        <end position="271"/>
    </location>
</feature>
<feature type="active site" description="Thioimide intermediate" evidence="1">
    <location>
        <position position="177"/>
    </location>
</feature>
<feature type="active site" description="Proton donor" evidence="1">
    <location>
        <position position="184"/>
    </location>
</feature>
<feature type="binding site" evidence="1">
    <location>
        <begin position="81"/>
        <end position="83"/>
    </location>
    <ligand>
        <name>substrate</name>
    </ligand>
</feature>
<feature type="binding site" evidence="1">
    <location>
        <begin position="83"/>
        <end position="84"/>
    </location>
    <ligand>
        <name>NADPH</name>
        <dbReference type="ChEBI" id="CHEBI:57783"/>
    </ligand>
</feature>
<feature type="binding site" evidence="1">
    <location>
        <begin position="216"/>
        <end position="217"/>
    </location>
    <ligand>
        <name>substrate</name>
    </ligand>
</feature>
<feature type="binding site" evidence="1">
    <location>
        <begin position="245"/>
        <end position="246"/>
    </location>
    <ligand>
        <name>NADPH</name>
        <dbReference type="ChEBI" id="CHEBI:57783"/>
    </ligand>
</feature>
<accession>Q4UPX6</accession>
<keyword id="KW-0963">Cytoplasm</keyword>
<keyword id="KW-0521">NADP</keyword>
<keyword id="KW-0560">Oxidoreductase</keyword>
<keyword id="KW-0671">Queuosine biosynthesis</keyword>
<gene>
    <name evidence="1" type="primary">queF</name>
    <name type="ordered locus">XC_3857</name>
</gene>
<proteinExistence type="inferred from homology"/>
<evidence type="ECO:0000255" key="1">
    <source>
        <dbReference type="HAMAP-Rule" id="MF_00817"/>
    </source>
</evidence>